<sequence>MVDRWYNIAADLPSVLAPPRDPDEGESRIGLLSKILPSALIDQEFTAERWVSIPEEVREAYRRVGRPTPLFRAEGLEKALGTGVRIYYKYEGVLPVGSHKLNTALAQAYYAKADGAVEVATETGAGQWGMAVSLAAALFGLRAVVFMTRSSYNSKRQRLTFMRAYGAVVYPSPSDVTEAGRRHYRPDHPGSLGIAISEAVEYVLSGERRKYLPGSVMEFVLLHQTVIGLEAVRQLPEEPDVAVACVGGGSNFAGFTYPMIGMKLRGEGFGRTRFVAVESEAAPKLTRGEYKYDFPDAVGVLPMLKMYTLGHDYVPPAIHAAGLRYHGAAPSLSLLRKLGIVEAVAYPQEEVMRAALLFARTEGIVPAPESAHAIKAAVDLAKKLPRGSVIAFNLSGHGLLDSDAYEKFLG</sequence>
<comment type="function">
    <text evidence="1">The beta subunit is responsible for the synthesis of L-tryptophan from indole and L-serine.</text>
</comment>
<comment type="catalytic activity">
    <reaction evidence="1">
        <text>(1S,2R)-1-C-(indol-3-yl)glycerol 3-phosphate + L-serine = D-glyceraldehyde 3-phosphate + L-tryptophan + H2O</text>
        <dbReference type="Rhea" id="RHEA:10532"/>
        <dbReference type="ChEBI" id="CHEBI:15377"/>
        <dbReference type="ChEBI" id="CHEBI:33384"/>
        <dbReference type="ChEBI" id="CHEBI:57912"/>
        <dbReference type="ChEBI" id="CHEBI:58866"/>
        <dbReference type="ChEBI" id="CHEBI:59776"/>
        <dbReference type="EC" id="4.2.1.20"/>
    </reaction>
</comment>
<comment type="cofactor">
    <cofactor evidence="1">
        <name>pyridoxal 5'-phosphate</name>
        <dbReference type="ChEBI" id="CHEBI:597326"/>
    </cofactor>
</comment>
<comment type="pathway">
    <text evidence="1">Amino-acid biosynthesis; L-tryptophan biosynthesis; L-tryptophan from chorismate: step 5/5.</text>
</comment>
<comment type="subunit">
    <text evidence="1">Tetramer of two alpha and two beta chains.</text>
</comment>
<comment type="similarity">
    <text evidence="1">Belongs to the TrpB family.</text>
</comment>
<keyword id="KW-0028">Amino-acid biosynthesis</keyword>
<keyword id="KW-0057">Aromatic amino acid biosynthesis</keyword>
<keyword id="KW-0456">Lyase</keyword>
<keyword id="KW-0663">Pyridoxal phosphate</keyword>
<keyword id="KW-1185">Reference proteome</keyword>
<keyword id="KW-0822">Tryptophan biosynthesis</keyword>
<organism>
    <name type="scientific">Pyrobaculum aerophilum (strain ATCC 51768 / DSM 7523 / JCM 9630 / CIP 104966 / NBRC 100827 / IM2)</name>
    <dbReference type="NCBI Taxonomy" id="178306"/>
    <lineage>
        <taxon>Archaea</taxon>
        <taxon>Thermoproteota</taxon>
        <taxon>Thermoprotei</taxon>
        <taxon>Thermoproteales</taxon>
        <taxon>Thermoproteaceae</taxon>
        <taxon>Pyrobaculum</taxon>
    </lineage>
</organism>
<evidence type="ECO:0000255" key="1">
    <source>
        <dbReference type="HAMAP-Rule" id="MF_00133"/>
    </source>
</evidence>
<accession>Q8ZV44</accession>
<proteinExistence type="inferred from homology"/>
<name>TRPB_PYRAE</name>
<gene>
    <name evidence="1" type="primary">trpB</name>
    <name type="ordered locus">PAE2462</name>
</gene>
<protein>
    <recommendedName>
        <fullName evidence="1">Tryptophan synthase beta chain</fullName>
        <ecNumber evidence="1">4.2.1.20</ecNumber>
    </recommendedName>
</protein>
<reference key="1">
    <citation type="journal article" date="2002" name="Proc. Natl. Acad. Sci. U.S.A.">
        <title>Genome sequence of the hyperthermophilic crenarchaeon Pyrobaculum aerophilum.</title>
        <authorList>
            <person name="Fitz-Gibbon S.T."/>
            <person name="Ladner H."/>
            <person name="Kim U.-J."/>
            <person name="Stetter K.O."/>
            <person name="Simon M.I."/>
            <person name="Miller J.H."/>
        </authorList>
    </citation>
    <scope>NUCLEOTIDE SEQUENCE [LARGE SCALE GENOMIC DNA]</scope>
    <source>
        <strain>ATCC 51768 / DSM 7523 / JCM 9630 / CIP 104966 / NBRC 100827 / IM2</strain>
    </source>
</reference>
<dbReference type="EC" id="4.2.1.20" evidence="1"/>
<dbReference type="EMBL" id="AE009441">
    <property type="protein sequence ID" value="AAL64212.1"/>
    <property type="molecule type" value="Genomic_DNA"/>
</dbReference>
<dbReference type="SMR" id="Q8ZV44"/>
<dbReference type="FunCoup" id="Q8ZV44">
    <property type="interactions" value="156"/>
</dbReference>
<dbReference type="STRING" id="178306.PAE2462"/>
<dbReference type="EnsemblBacteria" id="AAL64212">
    <property type="protein sequence ID" value="AAL64212"/>
    <property type="gene ID" value="PAE2462"/>
</dbReference>
<dbReference type="KEGG" id="pai:PAE2462"/>
<dbReference type="PATRIC" id="fig|178306.9.peg.1836"/>
<dbReference type="eggNOG" id="arCOG01432">
    <property type="taxonomic scope" value="Archaea"/>
</dbReference>
<dbReference type="HOGENOM" id="CLU_042858_1_0_2"/>
<dbReference type="InParanoid" id="Q8ZV44"/>
<dbReference type="UniPathway" id="UPA00035">
    <property type="reaction ID" value="UER00044"/>
</dbReference>
<dbReference type="Proteomes" id="UP000002439">
    <property type="component" value="Chromosome"/>
</dbReference>
<dbReference type="GO" id="GO:0052684">
    <property type="term" value="F:L-serine hydro-lyase (adding indole, L-tryptophan-forming) activity"/>
    <property type="evidence" value="ECO:0000318"/>
    <property type="project" value="GO_Central"/>
</dbReference>
<dbReference type="GO" id="GO:0030170">
    <property type="term" value="F:pyridoxal phosphate binding"/>
    <property type="evidence" value="ECO:0007669"/>
    <property type="project" value="InterPro"/>
</dbReference>
<dbReference type="GO" id="GO:0004834">
    <property type="term" value="F:tryptophan synthase activity"/>
    <property type="evidence" value="ECO:0007669"/>
    <property type="project" value="UniProtKB-UniRule"/>
</dbReference>
<dbReference type="GO" id="GO:0000162">
    <property type="term" value="P:L-tryptophan biosynthetic process"/>
    <property type="evidence" value="ECO:0000318"/>
    <property type="project" value="GO_Central"/>
</dbReference>
<dbReference type="CDD" id="cd06446">
    <property type="entry name" value="Trp-synth_B"/>
    <property type="match status" value="1"/>
</dbReference>
<dbReference type="Gene3D" id="3.40.50.1100">
    <property type="match status" value="2"/>
</dbReference>
<dbReference type="HAMAP" id="MF_00133">
    <property type="entry name" value="Trp_synth_beta"/>
    <property type="match status" value="1"/>
</dbReference>
<dbReference type="InterPro" id="IPR006316">
    <property type="entry name" value="Trp_synth_b-like"/>
</dbReference>
<dbReference type="InterPro" id="IPR006653">
    <property type="entry name" value="Trp_synth_b_CS"/>
</dbReference>
<dbReference type="InterPro" id="IPR006654">
    <property type="entry name" value="Trp_synth_beta"/>
</dbReference>
<dbReference type="InterPro" id="IPR023026">
    <property type="entry name" value="Trp_synth_beta/beta-like"/>
</dbReference>
<dbReference type="InterPro" id="IPR001926">
    <property type="entry name" value="TrpB-like_PALP"/>
</dbReference>
<dbReference type="InterPro" id="IPR036052">
    <property type="entry name" value="TrpB-like_PALP_sf"/>
</dbReference>
<dbReference type="NCBIfam" id="NF009057">
    <property type="entry name" value="PRK12391.1"/>
    <property type="match status" value="1"/>
</dbReference>
<dbReference type="NCBIfam" id="TIGR01415">
    <property type="entry name" value="trpB_rel"/>
    <property type="match status" value="1"/>
</dbReference>
<dbReference type="PANTHER" id="PTHR48077:SF6">
    <property type="entry name" value="TRYPTOPHAN SYNTHASE"/>
    <property type="match status" value="1"/>
</dbReference>
<dbReference type="PANTHER" id="PTHR48077">
    <property type="entry name" value="TRYPTOPHAN SYNTHASE-RELATED"/>
    <property type="match status" value="1"/>
</dbReference>
<dbReference type="Pfam" id="PF00291">
    <property type="entry name" value="PALP"/>
    <property type="match status" value="1"/>
</dbReference>
<dbReference type="PIRSF" id="PIRSF001413">
    <property type="entry name" value="Trp_syn_beta"/>
    <property type="match status" value="1"/>
</dbReference>
<dbReference type="PIRSF" id="PIRSF500824">
    <property type="entry name" value="TrpB_prok"/>
    <property type="match status" value="1"/>
</dbReference>
<dbReference type="SUPFAM" id="SSF53686">
    <property type="entry name" value="Tryptophan synthase beta subunit-like PLP-dependent enzymes"/>
    <property type="match status" value="1"/>
</dbReference>
<dbReference type="PROSITE" id="PS00168">
    <property type="entry name" value="TRP_SYNTHASE_BETA"/>
    <property type="match status" value="1"/>
</dbReference>
<feature type="chain" id="PRO_0000099049" description="Tryptophan synthase beta chain">
    <location>
        <begin position="1"/>
        <end position="410"/>
    </location>
</feature>
<feature type="modified residue" description="N6-(pyridoxal phosphate)lysine" evidence="1">
    <location>
        <position position="100"/>
    </location>
</feature>